<evidence type="ECO:0000255" key="1">
    <source>
        <dbReference type="HAMAP-Rule" id="MF_00764"/>
    </source>
</evidence>
<protein>
    <recommendedName>
        <fullName evidence="1">UPF0306 protein YhbP</fullName>
    </recommendedName>
</protein>
<feature type="chain" id="PRO_1000198364" description="UPF0306 protein YhbP">
    <location>
        <begin position="1"/>
        <end position="147"/>
    </location>
</feature>
<organism>
    <name type="scientific">Salmonella gallinarum (strain 287/91 / NCTC 13346)</name>
    <dbReference type="NCBI Taxonomy" id="550538"/>
    <lineage>
        <taxon>Bacteria</taxon>
        <taxon>Pseudomonadati</taxon>
        <taxon>Pseudomonadota</taxon>
        <taxon>Gammaproteobacteria</taxon>
        <taxon>Enterobacterales</taxon>
        <taxon>Enterobacteriaceae</taxon>
        <taxon>Salmonella</taxon>
    </lineage>
</organism>
<accession>B5REM0</accession>
<reference key="1">
    <citation type="journal article" date="2008" name="Genome Res.">
        <title>Comparative genome analysis of Salmonella enteritidis PT4 and Salmonella gallinarum 287/91 provides insights into evolutionary and host adaptation pathways.</title>
        <authorList>
            <person name="Thomson N.R."/>
            <person name="Clayton D.J."/>
            <person name="Windhorst D."/>
            <person name="Vernikos G."/>
            <person name="Davidson S."/>
            <person name="Churcher C."/>
            <person name="Quail M.A."/>
            <person name="Stevens M."/>
            <person name="Jones M.A."/>
            <person name="Watson M."/>
            <person name="Barron A."/>
            <person name="Layton A."/>
            <person name="Pickard D."/>
            <person name="Kingsley R.A."/>
            <person name="Bignell A."/>
            <person name="Clark L."/>
            <person name="Harris B."/>
            <person name="Ormond D."/>
            <person name="Abdellah Z."/>
            <person name="Brooks K."/>
            <person name="Cherevach I."/>
            <person name="Chillingworth T."/>
            <person name="Woodward J."/>
            <person name="Norberczak H."/>
            <person name="Lord A."/>
            <person name="Arrowsmith C."/>
            <person name="Jagels K."/>
            <person name="Moule S."/>
            <person name="Mungall K."/>
            <person name="Saunders M."/>
            <person name="Whitehead S."/>
            <person name="Chabalgoity J.A."/>
            <person name="Maskell D."/>
            <person name="Humphreys T."/>
            <person name="Roberts M."/>
            <person name="Barrow P.A."/>
            <person name="Dougan G."/>
            <person name="Parkhill J."/>
        </authorList>
    </citation>
    <scope>NUCLEOTIDE SEQUENCE [LARGE SCALE GENOMIC DNA]</scope>
    <source>
        <strain>287/91 / NCTC 13346</strain>
    </source>
</reference>
<gene>
    <name evidence="1" type="primary">yhbP</name>
    <name type="ordered locus">SG3161</name>
</gene>
<name>YHBP_SALG2</name>
<comment type="similarity">
    <text evidence="1">Belongs to the UPF0306 family.</text>
</comment>
<sequence length="147" mass="16688">MDTLTAIGRWLAKQHVVTWCVHHEGELWCANAFYLFDAQNVALYLLTDDKTRHAQMSGACAPVAGTVNGQPKTVARIRGVQFKGEIRRLEGQESDAARKAYLRRFPVARVLPAPVWEIRLDEIKFTDNTLGFGKKLHWLRDSRAQQA</sequence>
<dbReference type="EMBL" id="AM933173">
    <property type="protein sequence ID" value="CAR38960.1"/>
    <property type="molecule type" value="Genomic_DNA"/>
</dbReference>
<dbReference type="RefSeq" id="WP_000380404.1">
    <property type="nucleotide sequence ID" value="NC_011274.1"/>
</dbReference>
<dbReference type="SMR" id="B5REM0"/>
<dbReference type="KEGG" id="seg:SG3161"/>
<dbReference type="HOGENOM" id="CLU_105087_3_0_6"/>
<dbReference type="Proteomes" id="UP000008321">
    <property type="component" value="Chromosome"/>
</dbReference>
<dbReference type="Gene3D" id="2.30.110.10">
    <property type="entry name" value="Electron Transport, Fmn-binding Protein, Chain A"/>
    <property type="match status" value="1"/>
</dbReference>
<dbReference type="HAMAP" id="MF_00764">
    <property type="entry name" value="UPF0306"/>
    <property type="match status" value="1"/>
</dbReference>
<dbReference type="InterPro" id="IPR012349">
    <property type="entry name" value="Split_barrel_FMN-bd"/>
</dbReference>
<dbReference type="InterPro" id="IPR011194">
    <property type="entry name" value="UPF0306"/>
</dbReference>
<dbReference type="NCBIfam" id="NF002900">
    <property type="entry name" value="PRK03467.1"/>
    <property type="match status" value="1"/>
</dbReference>
<dbReference type="PIRSF" id="PIRSF009554">
    <property type="entry name" value="UCP009554"/>
    <property type="match status" value="1"/>
</dbReference>
<dbReference type="SUPFAM" id="SSF50475">
    <property type="entry name" value="FMN-binding split barrel"/>
    <property type="match status" value="1"/>
</dbReference>
<proteinExistence type="inferred from homology"/>